<accession>C3LTD1</accession>
<sequence length="149" mass="16454">MKIWVDADACPKVIRETLIRAAERTGVECTFVANHLIPLPKRDNIRALQVSSGFDIADNEIVRRTEAGDLVITADIPLADEVISKGGLALNPRGELYTKETIKARLNIRDFMDTMRASGIQTGGPAALSQTERREFANHLDRILAKRTG</sequence>
<feature type="chain" id="PRO_1000197838" description="UPF0178 protein VCM66_0838">
    <location>
        <begin position="1"/>
        <end position="149"/>
    </location>
</feature>
<dbReference type="EMBL" id="CP001233">
    <property type="protein sequence ID" value="ACP05157.1"/>
    <property type="molecule type" value="Genomic_DNA"/>
</dbReference>
<dbReference type="RefSeq" id="WP_000708225.1">
    <property type="nucleotide sequence ID" value="NC_012578.1"/>
</dbReference>
<dbReference type="KEGG" id="vcm:VCM66_0838"/>
<dbReference type="HOGENOM" id="CLU_106619_2_1_6"/>
<dbReference type="Proteomes" id="UP000001217">
    <property type="component" value="Chromosome I"/>
</dbReference>
<dbReference type="CDD" id="cd18720">
    <property type="entry name" value="PIN_YqxD-like"/>
    <property type="match status" value="1"/>
</dbReference>
<dbReference type="HAMAP" id="MF_00489">
    <property type="entry name" value="UPF0178"/>
    <property type="match status" value="1"/>
</dbReference>
<dbReference type="InterPro" id="IPR003791">
    <property type="entry name" value="UPF0178"/>
</dbReference>
<dbReference type="NCBIfam" id="NF001095">
    <property type="entry name" value="PRK00124.1"/>
    <property type="match status" value="1"/>
</dbReference>
<dbReference type="PANTHER" id="PTHR35146">
    <property type="entry name" value="UPF0178 PROTEIN YAII"/>
    <property type="match status" value="1"/>
</dbReference>
<dbReference type="PANTHER" id="PTHR35146:SF1">
    <property type="entry name" value="UPF0178 PROTEIN YAII"/>
    <property type="match status" value="1"/>
</dbReference>
<dbReference type="Pfam" id="PF02639">
    <property type="entry name" value="DUF188"/>
    <property type="match status" value="1"/>
</dbReference>
<evidence type="ECO:0000255" key="1">
    <source>
        <dbReference type="HAMAP-Rule" id="MF_00489"/>
    </source>
</evidence>
<comment type="similarity">
    <text evidence="1">Belongs to the UPF0178 family.</text>
</comment>
<organism>
    <name type="scientific">Vibrio cholerae serotype O1 (strain M66-2)</name>
    <dbReference type="NCBI Taxonomy" id="579112"/>
    <lineage>
        <taxon>Bacteria</taxon>
        <taxon>Pseudomonadati</taxon>
        <taxon>Pseudomonadota</taxon>
        <taxon>Gammaproteobacteria</taxon>
        <taxon>Vibrionales</taxon>
        <taxon>Vibrionaceae</taxon>
        <taxon>Vibrio</taxon>
    </lineage>
</organism>
<name>Y838_VIBCM</name>
<protein>
    <recommendedName>
        <fullName evidence="1">UPF0178 protein VCM66_0838</fullName>
    </recommendedName>
</protein>
<reference key="1">
    <citation type="journal article" date="2008" name="PLoS ONE">
        <title>A recalibrated molecular clock and independent origins for the cholera pandemic clones.</title>
        <authorList>
            <person name="Feng L."/>
            <person name="Reeves P.R."/>
            <person name="Lan R."/>
            <person name="Ren Y."/>
            <person name="Gao C."/>
            <person name="Zhou Z."/>
            <person name="Ren Y."/>
            <person name="Cheng J."/>
            <person name="Wang W."/>
            <person name="Wang J."/>
            <person name="Qian W."/>
            <person name="Li D."/>
            <person name="Wang L."/>
        </authorList>
    </citation>
    <scope>NUCLEOTIDE SEQUENCE [LARGE SCALE GENOMIC DNA]</scope>
    <source>
        <strain>M66-2</strain>
    </source>
</reference>
<gene>
    <name type="ordered locus">VCM66_0838</name>
</gene>
<proteinExistence type="inferred from homology"/>